<evidence type="ECO:0000250" key="1"/>
<evidence type="ECO:0000255" key="2"/>
<evidence type="ECO:0000255" key="3">
    <source>
        <dbReference type="PROSITE-ProRule" id="PRU00040"/>
    </source>
</evidence>
<keyword id="KW-1064">Adaptive immunity</keyword>
<keyword id="KW-0106">Calcium</keyword>
<keyword id="KW-1015">Disulfide bond</keyword>
<keyword id="KW-0254">Endocytosis</keyword>
<keyword id="KW-0325">Glycoprotein</keyword>
<keyword id="KW-0391">Immunity</keyword>
<keyword id="KW-0399">Innate immunity</keyword>
<keyword id="KW-0430">Lectin</keyword>
<keyword id="KW-0465">Mannose-binding</keyword>
<keyword id="KW-0472">Membrane</keyword>
<keyword id="KW-0479">Metal-binding</keyword>
<keyword id="KW-0675">Receptor</keyword>
<keyword id="KW-1185">Reference proteome</keyword>
<keyword id="KW-0677">Repeat</keyword>
<keyword id="KW-0735">Signal-anchor</keyword>
<keyword id="KW-0812">Transmembrane</keyword>
<keyword id="KW-1133">Transmembrane helix</keyword>
<dbReference type="EMBL" id="AY078855">
    <property type="protein sequence ID" value="AAL89534.1"/>
    <property type="molecule type" value="Genomic_DNA"/>
</dbReference>
<dbReference type="EMBL" id="AY078849">
    <property type="protein sequence ID" value="AAL89534.1"/>
    <property type="status" value="JOINED"/>
    <property type="molecule type" value="Genomic_DNA"/>
</dbReference>
<dbReference type="EMBL" id="AY078850">
    <property type="protein sequence ID" value="AAL89534.1"/>
    <property type="status" value="JOINED"/>
    <property type="molecule type" value="Genomic_DNA"/>
</dbReference>
<dbReference type="EMBL" id="AY078851">
    <property type="protein sequence ID" value="AAL89534.1"/>
    <property type="status" value="JOINED"/>
    <property type="molecule type" value="Genomic_DNA"/>
</dbReference>
<dbReference type="EMBL" id="AY078852">
    <property type="protein sequence ID" value="AAL89534.1"/>
    <property type="status" value="JOINED"/>
    <property type="molecule type" value="Genomic_DNA"/>
</dbReference>
<dbReference type="EMBL" id="AY078853">
    <property type="protein sequence ID" value="AAL89534.1"/>
    <property type="status" value="JOINED"/>
    <property type="molecule type" value="Genomic_DNA"/>
</dbReference>
<dbReference type="EMBL" id="AY078854">
    <property type="protein sequence ID" value="AAL89534.1"/>
    <property type="status" value="JOINED"/>
    <property type="molecule type" value="Genomic_DNA"/>
</dbReference>
<dbReference type="RefSeq" id="XP_004059943.1">
    <property type="nucleotide sequence ID" value="XM_004059895.1"/>
</dbReference>
<dbReference type="BMRB" id="Q8HY06"/>
<dbReference type="SMR" id="Q8HY06"/>
<dbReference type="FunCoup" id="Q8HY06">
    <property type="interactions" value="250"/>
</dbReference>
<dbReference type="STRING" id="9593.ENSGGOP00000021876"/>
<dbReference type="GlyCosmos" id="Q8HY06">
    <property type="glycosylation" value="2 sites, No reported glycans"/>
</dbReference>
<dbReference type="Ensembl" id="ENSGGOT00000026262.2">
    <property type="protein sequence ID" value="ENSGGOP00000021876.1"/>
    <property type="gene ID" value="ENSGGOG00000015715.3"/>
</dbReference>
<dbReference type="GeneID" id="101152880"/>
<dbReference type="KEGG" id="ggo:101152880"/>
<dbReference type="eggNOG" id="KOG4297">
    <property type="taxonomic scope" value="Eukaryota"/>
</dbReference>
<dbReference type="GeneTree" id="ENSGT00940000167383"/>
<dbReference type="HOGENOM" id="CLU_049894_7_3_1"/>
<dbReference type="InParanoid" id="Q8HY06"/>
<dbReference type="OMA" id="ERLCCHC"/>
<dbReference type="Proteomes" id="UP000001519">
    <property type="component" value="Chromosome 19"/>
</dbReference>
<dbReference type="Bgee" id="ENSGGOG00000015715">
    <property type="expression patterns" value="Expressed in liver and 1 other cell type or tissue"/>
</dbReference>
<dbReference type="GO" id="GO:0009897">
    <property type="term" value="C:external side of plasma membrane"/>
    <property type="evidence" value="ECO:0000318"/>
    <property type="project" value="GO_Central"/>
</dbReference>
<dbReference type="GO" id="GO:0048306">
    <property type="term" value="F:calcium-dependent protein binding"/>
    <property type="evidence" value="ECO:0007669"/>
    <property type="project" value="Ensembl"/>
</dbReference>
<dbReference type="GO" id="GO:0005537">
    <property type="term" value="F:D-mannose binding"/>
    <property type="evidence" value="ECO:0000318"/>
    <property type="project" value="GO_Central"/>
</dbReference>
<dbReference type="GO" id="GO:0046872">
    <property type="term" value="F:metal ion binding"/>
    <property type="evidence" value="ECO:0007669"/>
    <property type="project" value="UniProtKB-KW"/>
</dbReference>
<dbReference type="GO" id="GO:0038187">
    <property type="term" value="F:pattern recognition receptor activity"/>
    <property type="evidence" value="ECO:0000318"/>
    <property type="project" value="GO_Central"/>
</dbReference>
<dbReference type="GO" id="GO:0001618">
    <property type="term" value="F:virus receptor activity"/>
    <property type="evidence" value="ECO:0007669"/>
    <property type="project" value="Ensembl"/>
</dbReference>
<dbReference type="GO" id="GO:0002250">
    <property type="term" value="P:adaptive immune response"/>
    <property type="evidence" value="ECO:0007669"/>
    <property type="project" value="UniProtKB-KW"/>
</dbReference>
<dbReference type="GO" id="GO:0006897">
    <property type="term" value="P:endocytosis"/>
    <property type="evidence" value="ECO:0007669"/>
    <property type="project" value="UniProtKB-KW"/>
</dbReference>
<dbReference type="GO" id="GO:0006955">
    <property type="term" value="P:immune response"/>
    <property type="evidence" value="ECO:0000318"/>
    <property type="project" value="GO_Central"/>
</dbReference>
<dbReference type="GO" id="GO:0045087">
    <property type="term" value="P:innate immune response"/>
    <property type="evidence" value="ECO:0007669"/>
    <property type="project" value="UniProtKB-KW"/>
</dbReference>
<dbReference type="GO" id="GO:0046813">
    <property type="term" value="P:receptor-mediated virion attachment to host cell"/>
    <property type="evidence" value="ECO:0007669"/>
    <property type="project" value="Ensembl"/>
</dbReference>
<dbReference type="CDD" id="cd03590">
    <property type="entry name" value="CLECT_DC-SIGN_like"/>
    <property type="match status" value="1"/>
</dbReference>
<dbReference type="FunFam" id="3.10.100.10:FF:000044">
    <property type="entry name" value="CD209 antigen, isoform CRA_b"/>
    <property type="match status" value="1"/>
</dbReference>
<dbReference type="Gene3D" id="3.10.100.10">
    <property type="entry name" value="Mannose-Binding Protein A, subunit A"/>
    <property type="match status" value="1"/>
</dbReference>
<dbReference type="InterPro" id="IPR001304">
    <property type="entry name" value="C-type_lectin-like"/>
</dbReference>
<dbReference type="InterPro" id="IPR016186">
    <property type="entry name" value="C-type_lectin-like/link_sf"/>
</dbReference>
<dbReference type="InterPro" id="IPR050111">
    <property type="entry name" value="C-type_lectin/snaclec_domain"/>
</dbReference>
<dbReference type="InterPro" id="IPR018378">
    <property type="entry name" value="C-type_lectin_CS"/>
</dbReference>
<dbReference type="InterPro" id="IPR033989">
    <property type="entry name" value="CD209-like_CTLD"/>
</dbReference>
<dbReference type="InterPro" id="IPR016187">
    <property type="entry name" value="CTDL_fold"/>
</dbReference>
<dbReference type="PANTHER" id="PTHR22803">
    <property type="entry name" value="MANNOSE, PHOSPHOLIPASE, LECTIN RECEPTOR RELATED"/>
    <property type="match status" value="1"/>
</dbReference>
<dbReference type="Pfam" id="PF00059">
    <property type="entry name" value="Lectin_C"/>
    <property type="match status" value="1"/>
</dbReference>
<dbReference type="SMART" id="SM00034">
    <property type="entry name" value="CLECT"/>
    <property type="match status" value="1"/>
</dbReference>
<dbReference type="SUPFAM" id="SSF56436">
    <property type="entry name" value="C-type lectin-like"/>
    <property type="match status" value="1"/>
</dbReference>
<dbReference type="PROSITE" id="PS00615">
    <property type="entry name" value="C_TYPE_LECTIN_1"/>
    <property type="match status" value="1"/>
</dbReference>
<dbReference type="PROSITE" id="PS50041">
    <property type="entry name" value="C_TYPE_LECTIN_2"/>
    <property type="match status" value="1"/>
</dbReference>
<organism>
    <name type="scientific">Gorilla gorilla gorilla</name>
    <name type="common">Western lowland gorilla</name>
    <dbReference type="NCBI Taxonomy" id="9595"/>
    <lineage>
        <taxon>Eukaryota</taxon>
        <taxon>Metazoa</taxon>
        <taxon>Chordata</taxon>
        <taxon>Craniata</taxon>
        <taxon>Vertebrata</taxon>
        <taxon>Euteleostomi</taxon>
        <taxon>Mammalia</taxon>
        <taxon>Eutheria</taxon>
        <taxon>Euarchontoglires</taxon>
        <taxon>Primates</taxon>
        <taxon>Haplorrhini</taxon>
        <taxon>Catarrhini</taxon>
        <taxon>Hominidae</taxon>
        <taxon>Gorilla</taxon>
    </lineage>
</organism>
<comment type="function">
    <text evidence="1">Probable pathogen-recognition receptor involved in peripheral immune surveillance in liver. May mediate the endocytosis of pathogens which are subsequently degraded in lysosomal compartments. Probably recognizes in a calcium-dependent manner high mannose N-linked oligosaccharides in a variety of pathogen antigens. Is a receptor for ICAM3, probably by binding to mannose-like carbohydrates (By similarity).</text>
</comment>
<comment type="subunit">
    <text evidence="1">Homotetramer.</text>
</comment>
<comment type="subcellular location">
    <subcellularLocation>
        <location evidence="1">Membrane</location>
        <topology evidence="1">Single-pass type II membrane protein</topology>
    </subcellularLocation>
</comment>
<comment type="domain">
    <text evidence="1">The tandem repeat domain, also called neck domain, mediates oligomerization.</text>
</comment>
<sequence>MSDSKEPRVQQLGLLEEDPTTSGIRLFPRDFQFQQIHGHKSSTGCLGHGALVLQLLSFTLLAGVLVAILVQVSKVPSSLSQEQSEQDAIYQNLTQLKAAVGELSEKSKLQEIYQELTQLKAAVGELPEKSKLQEIYQELTQLKAAVGELPEKSKLQEIYQELTQLKAAVGELPEKSKLQEIYQELTRLKAAVGELPEKSKLQEIYQELTQLKAALGKLPDQSKQQQIYQELTDLKTAFERLCRHCPKDWTFFQGNCYFMSNSQRNWHNSVTACQEVRAQLVVIKSAEEQNFLQLQTSRSNRFSWMGLSDLNQEGTWQWVDGSPLSPSFQRYWNSGEPNNSGNEDCAEFSGSGWNDNRCDVDNYWICKKPTVCFRDE</sequence>
<gene>
    <name type="primary">CLEC4M</name>
    <name type="synonym">CD209L1</name>
</gene>
<proteinExistence type="inferred from homology"/>
<protein>
    <recommendedName>
        <fullName>C-type lectin domain family 4 member M</fullName>
    </recommendedName>
    <alternativeName>
        <fullName>CD209 antigen-like protein 1</fullName>
    </alternativeName>
    <cdAntigenName>CD299</cdAntigenName>
</protein>
<name>CLC4M_GORGO</name>
<reference key="1">
    <citation type="journal article" date="2003" name="J. Virol.">
        <title>Novel member of the CD209 (DC-SIGN) gene family in primates.</title>
        <authorList>
            <person name="Bashirova A.A."/>
            <person name="Wu L."/>
            <person name="Cheng J."/>
            <person name="Martin T.D."/>
            <person name="Martin M.P."/>
            <person name="Benveniste R.E."/>
            <person name="Lifson J.D."/>
            <person name="Kewalramani V.N."/>
            <person name="Hughes A."/>
            <person name="Carrington M."/>
        </authorList>
    </citation>
    <scope>NUCLEOTIDE SEQUENCE [GENOMIC DNA]</scope>
    <source>
        <strain>Isolate Ggo-3</strain>
    </source>
</reference>
<accession>Q8HY06</accession>
<feature type="chain" id="PRO_0000046625" description="C-type lectin domain family 4 member M">
    <location>
        <begin position="1"/>
        <end position="376"/>
    </location>
</feature>
<feature type="topological domain" description="Cytoplasmic" evidence="2">
    <location>
        <begin position="1"/>
        <end position="49"/>
    </location>
</feature>
<feature type="transmembrane region" description="Helical; Signal-anchor for type II membrane protein" evidence="2">
    <location>
        <begin position="50"/>
        <end position="70"/>
    </location>
</feature>
<feature type="topological domain" description="Extracellular" evidence="2">
    <location>
        <begin position="71"/>
        <end position="376"/>
    </location>
</feature>
<feature type="repeat" description="1">
    <location>
        <begin position="108"/>
        <end position="130"/>
    </location>
</feature>
<feature type="repeat" description="2">
    <location>
        <begin position="131"/>
        <end position="153"/>
    </location>
</feature>
<feature type="repeat" description="3">
    <location>
        <begin position="154"/>
        <end position="176"/>
    </location>
</feature>
<feature type="repeat" description="4">
    <location>
        <begin position="177"/>
        <end position="199"/>
    </location>
</feature>
<feature type="repeat" description="5">
    <location>
        <begin position="200"/>
        <end position="222"/>
    </location>
</feature>
<feature type="repeat" description="6">
    <location>
        <begin position="223"/>
        <end position="245"/>
    </location>
</feature>
<feature type="domain" description="C-type lectin" evidence="3">
    <location>
        <begin position="251"/>
        <end position="367"/>
    </location>
</feature>
<feature type="region of interest" description="6 X approximate tandem repeats">
    <location>
        <begin position="108"/>
        <end position="246"/>
    </location>
</feature>
<feature type="short sequence motif" description="Endocytosis signal" evidence="2">
    <location>
        <begin position="14"/>
        <end position="15"/>
    </location>
</feature>
<feature type="binding site" evidence="1">
    <location>
        <position position="336"/>
    </location>
    <ligand>
        <name>Ca(2+)</name>
        <dbReference type="ChEBI" id="CHEBI:29108"/>
    </ligand>
</feature>
<feature type="binding site" evidence="1">
    <location>
        <position position="338"/>
    </location>
    <ligand>
        <name>Ca(2+)</name>
        <dbReference type="ChEBI" id="CHEBI:29108"/>
    </ligand>
</feature>
<feature type="binding site" evidence="1">
    <location>
        <position position="340"/>
    </location>
    <ligand>
        <name>Ca(2+)</name>
        <dbReference type="ChEBI" id="CHEBI:29108"/>
    </ligand>
</feature>
<feature type="binding site" evidence="1">
    <location>
        <position position="343"/>
    </location>
    <ligand>
        <name>Ca(2+)</name>
        <dbReference type="ChEBI" id="CHEBI:29108"/>
    </ligand>
</feature>
<feature type="binding site" evidence="1">
    <location>
        <position position="354"/>
    </location>
    <ligand>
        <name>Ca(2+)</name>
        <dbReference type="ChEBI" id="CHEBI:29108"/>
    </ligand>
</feature>
<feature type="binding site" evidence="1">
    <location>
        <position position="355"/>
    </location>
    <ligand>
        <name>Ca(2+)</name>
        <dbReference type="ChEBI" id="CHEBI:29108"/>
    </ligand>
</feature>
<feature type="glycosylation site" description="N-linked (GlcNAc...) asparagine" evidence="2">
    <location>
        <position position="92"/>
    </location>
</feature>
<feature type="glycosylation site" description="N-linked (GlcNAc...) asparagine" evidence="2">
    <location>
        <position position="338"/>
    </location>
</feature>
<feature type="disulfide bond" evidence="3">
    <location>
        <begin position="242"/>
        <end position="372"/>
    </location>
</feature>
<feature type="disulfide bond" evidence="3">
    <location>
        <begin position="245"/>
        <end position="256"/>
    </location>
</feature>
<feature type="disulfide bond" evidence="3">
    <location>
        <begin position="273"/>
        <end position="366"/>
    </location>
</feature>
<feature type="disulfide bond" evidence="3">
    <location>
        <begin position="345"/>
        <end position="358"/>
    </location>
</feature>